<organism>
    <name type="scientific">Pyrobaculum calidifontis (strain DSM 21063 / JCM 11548 / VA1)</name>
    <dbReference type="NCBI Taxonomy" id="410359"/>
    <lineage>
        <taxon>Archaea</taxon>
        <taxon>Thermoproteota</taxon>
        <taxon>Thermoprotei</taxon>
        <taxon>Thermoproteales</taxon>
        <taxon>Thermoproteaceae</taxon>
        <taxon>Pyrobaculum</taxon>
    </lineage>
</organism>
<name>ARCH_PYRCJ</name>
<protein>
    <recommendedName>
        <fullName evidence="2">Protein archease</fullName>
    </recommendedName>
</protein>
<keyword id="KW-0106">Calcium</keyword>
<keyword id="KW-0479">Metal-binding</keyword>
<keyword id="KW-0819">tRNA processing</keyword>
<evidence type="ECO:0000250" key="1"/>
<evidence type="ECO:0000255" key="2">
    <source>
        <dbReference type="HAMAP-Rule" id="MF_01222"/>
    </source>
</evidence>
<proteinExistence type="inferred from homology"/>
<sequence length="147" mass="17104">MSCRKPANYRYGEHTADVLVQAFGCTLEEAFKNAAVALADLTYYSERVEPRMAKKVEVEYDDLEGLLFKWIDELLFLFDAEKFAWGRNIEVELRQGVGYRISATLHGEMYDINKHGFTGLIVKAMTFHMMEIKKVDDYWVLQYVVDI</sequence>
<comment type="function">
    <text evidence="1">Activates the tRNA-splicing ligase complex by facilitating the enzymatic turnover of catalytic subunit RtcB. Acts by promoting the guanylylation of RtcB, a key intermediate step in tRNA ligation. Can also alter the NTP specificity of RtcB such that ATP, dGTP or ITP is used efficiently (By similarity).</text>
</comment>
<comment type="similarity">
    <text evidence="2">Belongs to the archease family.</text>
</comment>
<dbReference type="EMBL" id="CP000561">
    <property type="protein sequence ID" value="ABO07996.1"/>
    <property type="molecule type" value="Genomic_DNA"/>
</dbReference>
<dbReference type="RefSeq" id="WP_011849254.1">
    <property type="nucleotide sequence ID" value="NC_009073.1"/>
</dbReference>
<dbReference type="SMR" id="A3MTM9"/>
<dbReference type="STRING" id="410359.Pcal_0569"/>
<dbReference type="GeneID" id="4909458"/>
<dbReference type="KEGG" id="pcl:Pcal_0569"/>
<dbReference type="eggNOG" id="arCOG04055">
    <property type="taxonomic scope" value="Archaea"/>
</dbReference>
<dbReference type="HOGENOM" id="CLU_111362_3_0_2"/>
<dbReference type="OrthoDB" id="8831at2157"/>
<dbReference type="Proteomes" id="UP000001431">
    <property type="component" value="Chromosome"/>
</dbReference>
<dbReference type="GO" id="GO:0005509">
    <property type="term" value="F:calcium ion binding"/>
    <property type="evidence" value="ECO:0007669"/>
    <property type="project" value="UniProtKB-UniRule"/>
</dbReference>
<dbReference type="GO" id="GO:0006388">
    <property type="term" value="P:tRNA splicing, via endonucleolytic cleavage and ligation"/>
    <property type="evidence" value="ECO:0007669"/>
    <property type="project" value="UniProtKB-UniRule"/>
</dbReference>
<dbReference type="Gene3D" id="3.55.10.10">
    <property type="entry name" value="Archease domain"/>
    <property type="match status" value="1"/>
</dbReference>
<dbReference type="HAMAP" id="MF_01222">
    <property type="entry name" value="Archease_arch"/>
    <property type="match status" value="1"/>
</dbReference>
<dbReference type="InterPro" id="IPR002804">
    <property type="entry name" value="Archease"/>
</dbReference>
<dbReference type="InterPro" id="IPR022952">
    <property type="entry name" value="Archease_arc"/>
</dbReference>
<dbReference type="InterPro" id="IPR023572">
    <property type="entry name" value="Archease_dom"/>
</dbReference>
<dbReference type="InterPro" id="IPR036820">
    <property type="entry name" value="Archease_dom_sf"/>
</dbReference>
<dbReference type="PANTHER" id="PTHR12682">
    <property type="entry name" value="ARCHEASE"/>
    <property type="match status" value="1"/>
</dbReference>
<dbReference type="PANTHER" id="PTHR12682:SF11">
    <property type="entry name" value="PROTEIN ARCHEASE"/>
    <property type="match status" value="1"/>
</dbReference>
<dbReference type="Pfam" id="PF01951">
    <property type="entry name" value="Archease"/>
    <property type="match status" value="1"/>
</dbReference>
<dbReference type="SUPFAM" id="SSF69819">
    <property type="entry name" value="MTH1598-like"/>
    <property type="match status" value="1"/>
</dbReference>
<gene>
    <name type="ordered locus">Pcal_0569</name>
</gene>
<accession>A3MTM9</accession>
<reference key="1">
    <citation type="submission" date="2007-02" db="EMBL/GenBank/DDBJ databases">
        <title>Complete sequence of Pyrobaculum calidifontis JCM 11548.</title>
        <authorList>
            <consortium name="US DOE Joint Genome Institute"/>
            <person name="Copeland A."/>
            <person name="Lucas S."/>
            <person name="Lapidus A."/>
            <person name="Barry K."/>
            <person name="Glavina del Rio T."/>
            <person name="Dalin E."/>
            <person name="Tice H."/>
            <person name="Pitluck S."/>
            <person name="Chain P."/>
            <person name="Malfatti S."/>
            <person name="Shin M."/>
            <person name="Vergez L."/>
            <person name="Schmutz J."/>
            <person name="Larimer F."/>
            <person name="Land M."/>
            <person name="Hauser L."/>
            <person name="Kyrpides N."/>
            <person name="Mikhailova N."/>
            <person name="Cozen A.E."/>
            <person name="Fitz-Gibbon S.T."/>
            <person name="House C.H."/>
            <person name="Saltikov C."/>
            <person name="Lowe T.M."/>
            <person name="Richardson P."/>
        </authorList>
    </citation>
    <scope>NUCLEOTIDE SEQUENCE [LARGE SCALE GENOMIC DNA]</scope>
    <source>
        <strain>DSM 21063 / JCM 11548 / VA1</strain>
    </source>
</reference>
<feature type="chain" id="PRO_1000066782" description="Protein archease">
    <location>
        <begin position="1"/>
        <end position="147"/>
    </location>
</feature>
<feature type="binding site" evidence="1">
    <location>
        <position position="17"/>
    </location>
    <ligand>
        <name>Ca(2+)</name>
        <dbReference type="ChEBI" id="CHEBI:29108"/>
    </ligand>
</feature>
<feature type="binding site" evidence="1">
    <location>
        <position position="146"/>
    </location>
    <ligand>
        <name>Ca(2+)</name>
        <dbReference type="ChEBI" id="CHEBI:29108"/>
    </ligand>
</feature>
<feature type="binding site" evidence="1">
    <location>
        <position position="147"/>
    </location>
    <ligand>
        <name>Ca(2+)</name>
        <dbReference type="ChEBI" id="CHEBI:29108"/>
    </ligand>
</feature>